<comment type="function">
    <text evidence="1">May be a substrate-recognition component of a SCF-like ECS (Elongin-Cullin-SOCS-box protein) E3 ubiquitin-protein ligase complex which mediates the ubiquitination and subsequent proteasomal degradation of target proteins.</text>
</comment>
<comment type="pathway">
    <text>Protein modification; protein ubiquitination.</text>
</comment>
<comment type="interaction">
    <interactant intactId="EBI-3923154">
        <id>Q8WXI3</id>
    </interactant>
    <interactant intactId="EBI-11911016">
        <id>P80188</id>
        <label>LCN2</label>
    </interactant>
    <organismsDiffer>false</organismsDiffer>
    <experiments>3</experiments>
</comment>
<comment type="interaction">
    <interactant intactId="EBI-3923154">
        <id>Q8WXI3</id>
    </interactant>
    <interactant intactId="EBI-16439278">
        <id>Q6FHY5</id>
        <label>MEOX2</label>
    </interactant>
    <organismsDiffer>false</organismsDiffer>
    <experiments>3</experiments>
</comment>
<comment type="subcellular location">
    <subcellularLocation>
        <location evidence="3">Cytoplasm</location>
    </subcellularLocation>
    <subcellularLocation>
        <location evidence="3">Nucleus</location>
    </subcellularLocation>
    <text>In the ciliary body, it is detected in the cytoplasm and perinuclear region of the pigmented ciliary epithelial layer. In the retina, it is detected in the nuclei of retinal ganglion cells.</text>
</comment>
<comment type="alternative products">
    <event type="alternative splicing"/>
    <isoform>
        <id>Q8WXI3-1</id>
        <name>1</name>
        <sequence type="displayed"/>
    </isoform>
    <isoform>
        <id>Q8WXI3-2</id>
        <name>2</name>
        <sequence type="described" ref="VSP_023357"/>
    </isoform>
    <isoform>
        <id>Q8WXI3-3</id>
        <name>3</name>
        <sequence type="described" ref="VSP_038997"/>
    </isoform>
</comment>
<comment type="tissue specificity">
    <text evidence="3">Expressed in the eye. The highest expression is observed in the iris, with moderate levels in the trabecular meshwork (TM), the lamina, and the optic nerve; slightly lower levels in the ciliary body, retina, and choroid; and very low levels in the lens.</text>
</comment>
<comment type="domain">
    <text evidence="1">The SOCS box domain mediates the interaction with the Elongin BC complex, an adapter module in different E3 ubiquitin-protein ligase complexes.</text>
</comment>
<comment type="disease" evidence="3">
    <disease id="DI-03767">
        <name>Glaucoma 1, open angle, F</name>
        <acronym>GLC1F</acronym>
        <description>A form of primary open angle glaucoma (POAG). POAG is characterized by a specific pattern of optic nerve and visual field defects. The angle of the anterior chamber of the eye is open, and usually the intraocular pressure is increased. However, glaucoma can occur at any intraocular pressure. The disease is generally asymptomatic until the late stages, by which time significant and irreversible optic nerve damage has already taken place.</description>
        <dbReference type="MIM" id="603383"/>
    </disease>
    <text>The disease is caused by variants affecting the gene represented in this entry.</text>
</comment>
<comment type="similarity">
    <text evidence="6">Belongs to the ankyrin SOCS box (ASB) family.</text>
</comment>
<reference key="1">
    <citation type="submission" date="2001-09" db="EMBL/GenBank/DDBJ databases">
        <authorList>
            <person name="Kile B.T."/>
            <person name="Hilton D.J."/>
            <person name="Nicola N.A."/>
        </authorList>
    </citation>
    <scope>NUCLEOTIDE SEQUENCE [MRNA] (ISOFORM 2)</scope>
</reference>
<reference key="2">
    <citation type="journal article" date="2004" name="Nat. Genet.">
        <title>Complete sequencing and characterization of 21,243 full-length human cDNAs.</title>
        <authorList>
            <person name="Ota T."/>
            <person name="Suzuki Y."/>
            <person name="Nishikawa T."/>
            <person name="Otsuki T."/>
            <person name="Sugiyama T."/>
            <person name="Irie R."/>
            <person name="Wakamatsu A."/>
            <person name="Hayashi K."/>
            <person name="Sato H."/>
            <person name="Nagai K."/>
            <person name="Kimura K."/>
            <person name="Makita H."/>
            <person name="Sekine M."/>
            <person name="Obayashi M."/>
            <person name="Nishi T."/>
            <person name="Shibahara T."/>
            <person name="Tanaka T."/>
            <person name="Ishii S."/>
            <person name="Yamamoto J."/>
            <person name="Saito K."/>
            <person name="Kawai Y."/>
            <person name="Isono Y."/>
            <person name="Nakamura Y."/>
            <person name="Nagahari K."/>
            <person name="Murakami K."/>
            <person name="Yasuda T."/>
            <person name="Iwayanagi T."/>
            <person name="Wagatsuma M."/>
            <person name="Shiratori A."/>
            <person name="Sudo H."/>
            <person name="Hosoiri T."/>
            <person name="Kaku Y."/>
            <person name="Kodaira H."/>
            <person name="Kondo H."/>
            <person name="Sugawara M."/>
            <person name="Takahashi M."/>
            <person name="Kanda K."/>
            <person name="Yokoi T."/>
            <person name="Furuya T."/>
            <person name="Kikkawa E."/>
            <person name="Omura Y."/>
            <person name="Abe K."/>
            <person name="Kamihara K."/>
            <person name="Katsuta N."/>
            <person name="Sato K."/>
            <person name="Tanikawa M."/>
            <person name="Yamazaki M."/>
            <person name="Ninomiya K."/>
            <person name="Ishibashi T."/>
            <person name="Yamashita H."/>
            <person name="Murakawa K."/>
            <person name="Fujimori K."/>
            <person name="Tanai H."/>
            <person name="Kimata M."/>
            <person name="Watanabe M."/>
            <person name="Hiraoka S."/>
            <person name="Chiba Y."/>
            <person name="Ishida S."/>
            <person name="Ono Y."/>
            <person name="Takiguchi S."/>
            <person name="Watanabe S."/>
            <person name="Yosida M."/>
            <person name="Hotuta T."/>
            <person name="Kusano J."/>
            <person name="Kanehori K."/>
            <person name="Takahashi-Fujii A."/>
            <person name="Hara H."/>
            <person name="Tanase T.-O."/>
            <person name="Nomura Y."/>
            <person name="Togiya S."/>
            <person name="Komai F."/>
            <person name="Hara R."/>
            <person name="Takeuchi K."/>
            <person name="Arita M."/>
            <person name="Imose N."/>
            <person name="Musashino K."/>
            <person name="Yuuki H."/>
            <person name="Oshima A."/>
            <person name="Sasaki N."/>
            <person name="Aotsuka S."/>
            <person name="Yoshikawa Y."/>
            <person name="Matsunawa H."/>
            <person name="Ichihara T."/>
            <person name="Shiohata N."/>
            <person name="Sano S."/>
            <person name="Moriya S."/>
            <person name="Momiyama H."/>
            <person name="Satoh N."/>
            <person name="Takami S."/>
            <person name="Terashima Y."/>
            <person name="Suzuki O."/>
            <person name="Nakagawa S."/>
            <person name="Senoh A."/>
            <person name="Mizoguchi H."/>
            <person name="Goto Y."/>
            <person name="Shimizu F."/>
            <person name="Wakebe H."/>
            <person name="Hishigaki H."/>
            <person name="Watanabe T."/>
            <person name="Sugiyama A."/>
            <person name="Takemoto M."/>
            <person name="Kawakami B."/>
            <person name="Yamazaki M."/>
            <person name="Watanabe K."/>
            <person name="Kumagai A."/>
            <person name="Itakura S."/>
            <person name="Fukuzumi Y."/>
            <person name="Fujimori Y."/>
            <person name="Komiyama M."/>
            <person name="Tashiro H."/>
            <person name="Tanigami A."/>
            <person name="Fujiwara T."/>
            <person name="Ono T."/>
            <person name="Yamada K."/>
            <person name="Fujii Y."/>
            <person name="Ozaki K."/>
            <person name="Hirao M."/>
            <person name="Ohmori Y."/>
            <person name="Kawabata A."/>
            <person name="Hikiji T."/>
            <person name="Kobatake N."/>
            <person name="Inagaki H."/>
            <person name="Ikema Y."/>
            <person name="Okamoto S."/>
            <person name="Okitani R."/>
            <person name="Kawakami T."/>
            <person name="Noguchi S."/>
            <person name="Itoh T."/>
            <person name="Shigeta K."/>
            <person name="Senba T."/>
            <person name="Matsumura K."/>
            <person name="Nakajima Y."/>
            <person name="Mizuno T."/>
            <person name="Morinaga M."/>
            <person name="Sasaki M."/>
            <person name="Togashi T."/>
            <person name="Oyama M."/>
            <person name="Hata H."/>
            <person name="Watanabe M."/>
            <person name="Komatsu T."/>
            <person name="Mizushima-Sugano J."/>
            <person name="Satoh T."/>
            <person name="Shirai Y."/>
            <person name="Takahashi Y."/>
            <person name="Nakagawa K."/>
            <person name="Okumura K."/>
            <person name="Nagase T."/>
            <person name="Nomura N."/>
            <person name="Kikuchi H."/>
            <person name="Masuho Y."/>
            <person name="Yamashita R."/>
            <person name="Nakai K."/>
            <person name="Yada T."/>
            <person name="Nakamura Y."/>
            <person name="Ohara O."/>
            <person name="Isogai T."/>
            <person name="Sugano S."/>
        </authorList>
    </citation>
    <scope>NUCLEOTIDE SEQUENCE [LARGE SCALE MRNA] (ISOFORM 3)</scope>
    <source>
        <tissue>Skeletal muscle</tissue>
    </source>
</reference>
<reference key="3">
    <citation type="journal article" date="2003" name="Nature">
        <title>The DNA sequence of human chromosome 7.</title>
        <authorList>
            <person name="Hillier L.W."/>
            <person name="Fulton R.S."/>
            <person name="Fulton L.A."/>
            <person name="Graves T.A."/>
            <person name="Pepin K.H."/>
            <person name="Wagner-McPherson C."/>
            <person name="Layman D."/>
            <person name="Maas J."/>
            <person name="Jaeger S."/>
            <person name="Walker R."/>
            <person name="Wylie K."/>
            <person name="Sekhon M."/>
            <person name="Becker M.C."/>
            <person name="O'Laughlin M.D."/>
            <person name="Schaller M.E."/>
            <person name="Fewell G.A."/>
            <person name="Delehaunty K.D."/>
            <person name="Miner T.L."/>
            <person name="Nash W.E."/>
            <person name="Cordes M."/>
            <person name="Du H."/>
            <person name="Sun H."/>
            <person name="Edwards J."/>
            <person name="Bradshaw-Cordum H."/>
            <person name="Ali J."/>
            <person name="Andrews S."/>
            <person name="Isak A."/>
            <person name="Vanbrunt A."/>
            <person name="Nguyen C."/>
            <person name="Du F."/>
            <person name="Lamar B."/>
            <person name="Courtney L."/>
            <person name="Kalicki J."/>
            <person name="Ozersky P."/>
            <person name="Bielicki L."/>
            <person name="Scott K."/>
            <person name="Holmes A."/>
            <person name="Harkins R."/>
            <person name="Harris A."/>
            <person name="Strong C.M."/>
            <person name="Hou S."/>
            <person name="Tomlinson C."/>
            <person name="Dauphin-Kohlberg S."/>
            <person name="Kozlowicz-Reilly A."/>
            <person name="Leonard S."/>
            <person name="Rohlfing T."/>
            <person name="Rock S.M."/>
            <person name="Tin-Wollam A.-M."/>
            <person name="Abbott A."/>
            <person name="Minx P."/>
            <person name="Maupin R."/>
            <person name="Strowmatt C."/>
            <person name="Latreille P."/>
            <person name="Miller N."/>
            <person name="Johnson D."/>
            <person name="Murray J."/>
            <person name="Woessner J.P."/>
            <person name="Wendl M.C."/>
            <person name="Yang S.-P."/>
            <person name="Schultz B.R."/>
            <person name="Wallis J.W."/>
            <person name="Spieth J."/>
            <person name="Bieri T.A."/>
            <person name="Nelson J.O."/>
            <person name="Berkowicz N."/>
            <person name="Wohldmann P.E."/>
            <person name="Cook L.L."/>
            <person name="Hickenbotham M.T."/>
            <person name="Eldred J."/>
            <person name="Williams D."/>
            <person name="Bedell J.A."/>
            <person name="Mardis E.R."/>
            <person name="Clifton S.W."/>
            <person name="Chissoe S.L."/>
            <person name="Marra M.A."/>
            <person name="Raymond C."/>
            <person name="Haugen E."/>
            <person name="Gillett W."/>
            <person name="Zhou Y."/>
            <person name="James R."/>
            <person name="Phelps K."/>
            <person name="Iadanoto S."/>
            <person name="Bubb K."/>
            <person name="Simms E."/>
            <person name="Levy R."/>
            <person name="Clendenning J."/>
            <person name="Kaul R."/>
            <person name="Kent W.J."/>
            <person name="Furey T.S."/>
            <person name="Baertsch R.A."/>
            <person name="Brent M.R."/>
            <person name="Keibler E."/>
            <person name="Flicek P."/>
            <person name="Bork P."/>
            <person name="Suyama M."/>
            <person name="Bailey J.A."/>
            <person name="Portnoy M.E."/>
            <person name="Torrents D."/>
            <person name="Chinwalla A.T."/>
            <person name="Gish W.R."/>
            <person name="Eddy S.R."/>
            <person name="McPherson J.D."/>
            <person name="Olson M.V."/>
            <person name="Eichler E.E."/>
            <person name="Green E.D."/>
            <person name="Waterston R.H."/>
            <person name="Wilson R.K."/>
        </authorList>
    </citation>
    <scope>NUCLEOTIDE SEQUENCE [LARGE SCALE GENOMIC DNA]</scope>
</reference>
<reference key="4">
    <citation type="journal article" date="2004" name="Genome Res.">
        <title>The status, quality, and expansion of the NIH full-length cDNA project: the Mammalian Gene Collection (MGC).</title>
        <authorList>
            <consortium name="The MGC Project Team"/>
        </authorList>
    </citation>
    <scope>NUCLEOTIDE SEQUENCE [LARGE SCALE MRNA] (ISOFORM 1)</scope>
</reference>
<reference key="5">
    <citation type="journal article" date="2012" name="Hum. Mol. Genet.">
        <title>Variants in ASB10 are associated with open-angle glaucoma.</title>
        <authorList>
            <person name="Pasutto F."/>
            <person name="Keller K.E."/>
            <person name="Weisschuh N."/>
            <person name="Sticht H."/>
            <person name="Samples J.R."/>
            <person name="Yang Y.F."/>
            <person name="Zenkel M."/>
            <person name="Schlotzer-Schrehardt U."/>
            <person name="Mardin C.Y."/>
            <person name="Frezzotti P."/>
            <person name="Edmunds B."/>
            <person name="Kramer P.L."/>
            <person name="Gramer E."/>
            <person name="Reis A."/>
            <person name="Acott T.S."/>
            <person name="Wirtz M.K."/>
        </authorList>
    </citation>
    <scope>VARIANTS GLC1F SER-48; GLU-65; MET-67; HIS-72; GLN-94; GLU-97; CYS-183; VAL-197; LEU-207; HIS-272; LEU-295; THR-320; GLN-332; TYR-356; HIS-360 AND GLY-440</scope>
    <scope>VARIANTS GLC1F SER-19; SER-32 AND GLN-39 (ISOFORM 3)</scope>
    <scope>VARIANTS VAL-88; TYR-91; VAL-172; TRP-189; GLY-237; CYS-304; MET-329; CYS-372; THR-402 AND CYS-453</scope>
    <scope>SUBCELLULAR LOCATION</scope>
    <scope>TISSUE SPECIFICITY</scope>
</reference>
<keyword id="KW-0025">Alternative splicing</keyword>
<keyword id="KW-0040">ANK repeat</keyword>
<keyword id="KW-0963">Cytoplasm</keyword>
<keyword id="KW-0225">Disease variant</keyword>
<keyword id="KW-0955">Glaucoma</keyword>
<keyword id="KW-0539">Nucleus</keyword>
<keyword id="KW-1267">Proteomics identification</keyword>
<keyword id="KW-1185">Reference proteome</keyword>
<keyword id="KW-0677">Repeat</keyword>
<keyword id="KW-0833">Ubl conjugation pathway</keyword>
<name>ASB10_HUMAN</name>
<gene>
    <name type="primary">ASB10</name>
</gene>
<feature type="chain" id="PRO_0000066942" description="Ankyrin repeat and SOCS box protein 10">
    <location>
        <begin position="1"/>
        <end position="467"/>
    </location>
</feature>
<feature type="repeat" description="ANK 1">
    <location>
        <begin position="115"/>
        <end position="144"/>
    </location>
</feature>
<feature type="repeat" description="ANK 2">
    <location>
        <begin position="147"/>
        <end position="176"/>
    </location>
</feature>
<feature type="repeat" description="ANK 3">
    <location>
        <begin position="180"/>
        <end position="209"/>
    </location>
</feature>
<feature type="repeat" description="ANK 4">
    <location>
        <begin position="214"/>
        <end position="243"/>
    </location>
</feature>
<feature type="repeat" description="ANK 5">
    <location>
        <begin position="247"/>
        <end position="289"/>
    </location>
</feature>
<feature type="repeat" description="ANK 6">
    <location>
        <begin position="293"/>
        <end position="322"/>
    </location>
</feature>
<feature type="repeat" description="ANK 7">
    <location>
        <begin position="326"/>
        <end position="361"/>
    </location>
</feature>
<feature type="domain" description="SOCS box" evidence="2">
    <location>
        <begin position="412"/>
        <end position="464"/>
    </location>
</feature>
<feature type="splice variant" id="VSP_038997" description="In isoform 3." evidence="4">
    <original>MLMSWSPEECKGQGEPLDDRHPLCARLVEKPSRGSEEHLKSGPGPIVTRTASGPALAFWQAVLAGDVGCVSRILADSSTGLAPDSVFDTSDPERWRDFRFNIRALR</original>
    <variation>MPWGKNSSPHWGHHLGCLPSAPACRIWRPHSRPAWEPPRPSPLLCQDMALQNALYTGDLARLQELFPPHSTADLLLESRAAEPRWSSHQRG</variation>
    <location>
        <begin position="1"/>
        <end position="106"/>
    </location>
</feature>
<feature type="splice variant" id="VSP_023357" description="In isoform 2." evidence="5">
    <location>
        <begin position="369"/>
        <end position="406"/>
    </location>
</feature>
<feature type="sequence variant" id="VAR_069867" description="In GLC1F; uncertain significance; dbSNP:rs151344615." evidence="3">
    <original>T</original>
    <variation>S</variation>
    <location>
        <position position="48"/>
    </location>
</feature>
<feature type="sequence variant" id="VAR_069868" description="In GLC1F; uncertain significance; dbSNP:rs104886491." evidence="3">
    <original>G</original>
    <variation>E</variation>
    <location>
        <position position="65"/>
    </location>
</feature>
<feature type="sequence variant" id="VAR_069869" description="In GLC1F; uncertain significance; dbSNP:rs151344616." evidence="3">
    <original>V</original>
    <variation>M</variation>
    <location>
        <position position="67"/>
    </location>
</feature>
<feature type="sequence variant" id="VAR_069870" description="In GLC1F; uncertain significance; dbSNP:rs104886488." evidence="3">
    <original>R</original>
    <variation>H</variation>
    <location>
        <position position="72"/>
    </location>
</feature>
<feature type="sequence variant" id="VAR_069871" description="In dbSNP:rs151344617." evidence="3">
    <original>D</original>
    <variation>V</variation>
    <location>
        <position position="88"/>
    </location>
</feature>
<feature type="sequence variant" id="VAR_069872" description="In dbSNP:rs104886490." evidence="3">
    <original>D</original>
    <variation>Y</variation>
    <location>
        <position position="91"/>
    </location>
</feature>
<feature type="sequence variant" id="VAR_069873" description="In GLC1F; uncertain significance; dbSNP:rs147737381." evidence="3">
    <original>R</original>
    <variation>Q</variation>
    <location>
        <position position="94"/>
    </location>
</feature>
<feature type="sequence variant" id="VAR_069874" description="In GLC1F; uncertain significance; dbSNP:rs151344619." evidence="3">
    <original>D</original>
    <variation>E</variation>
    <location>
        <position position="97"/>
    </location>
</feature>
<feature type="sequence variant" id="VAR_069875" description="In dbSNP:rs151344604." evidence="3">
    <original>A</original>
    <variation>V</variation>
    <location>
        <position position="172"/>
    </location>
</feature>
<feature type="sequence variant" id="VAR_069876" description="In GLC1F; uncertain significance; dbSNP:rs151344605." evidence="3">
    <original>R</original>
    <variation>C</variation>
    <location>
        <position position="183"/>
    </location>
</feature>
<feature type="sequence variant" id="VAR_069877" description="In dbSNP:rs104886473." evidence="3">
    <original>R</original>
    <variation>W</variation>
    <location>
        <position position="189"/>
    </location>
</feature>
<feature type="sequence variant" id="VAR_069878" description="In GLC1F; uncertain significance; dbSNP:rs151344607." evidence="3">
    <original>A</original>
    <variation>V</variation>
    <location>
        <position position="197"/>
    </location>
</feature>
<feature type="sequence variant" id="VAR_069879" description="In GLC1F; uncertain significance; dbSNP:rs104886474." evidence="3">
    <original>V</original>
    <variation>L</variation>
    <location>
        <position position="207"/>
    </location>
</feature>
<feature type="sequence variant" id="VAR_069880" description="In dbSNP:rs61735708." evidence="3">
    <original>R</original>
    <variation>G</variation>
    <location>
        <position position="237"/>
    </location>
</feature>
<feature type="sequence variant" id="VAR_069881" description="In GLC1F; uncertain significance; dbSNP:rs140602973." evidence="3">
    <original>R</original>
    <variation>H</variation>
    <location>
        <position position="272"/>
    </location>
</feature>
<feature type="sequence variant" id="VAR_069882" description="In GLC1F; uncertain significance; dbSNP:rs151344609." evidence="3">
    <original>Q</original>
    <variation>L</variation>
    <location>
        <position position="295"/>
    </location>
</feature>
<feature type="sequence variant" id="VAR_069883" description="In dbSNP:rs61735130." evidence="3">
    <original>R</original>
    <variation>C</variation>
    <location>
        <position position="304"/>
    </location>
</feature>
<feature type="sequence variant" id="VAR_069884" description="In GLC1F; uncertain significance; dbSNP:rs151344610." evidence="3">
    <original>A</original>
    <variation>T</variation>
    <location>
        <position position="320"/>
    </location>
</feature>
<feature type="sequence variant" id="VAR_069885" description="In dbSNP:rs104886481." evidence="3">
    <original>T</original>
    <variation>M</variation>
    <location>
        <position position="329"/>
    </location>
</feature>
<feature type="sequence variant" id="VAR_069886" description="In GLC1F; uncertain significance; dbSNP:rs104886482." evidence="3">
    <original>H</original>
    <variation>Q</variation>
    <location>
        <position position="332"/>
    </location>
</feature>
<feature type="sequence variant" id="VAR_069887" description="In GLC1F; uncertain significance; dbSNP:rs151344611." evidence="3">
    <original>H</original>
    <variation>Y</variation>
    <location>
        <position position="356"/>
    </location>
</feature>
<feature type="sequence variant" id="VAR_069888" description="In GLC1F; uncertain significance; dbSNP:rs151344612." evidence="3">
    <original>R</original>
    <variation>H</variation>
    <location>
        <position position="360"/>
    </location>
</feature>
<feature type="sequence variant" id="VAR_069889" description="In dbSNP:rs62489646." evidence="3">
    <original>R</original>
    <variation>C</variation>
    <location>
        <position position="372"/>
    </location>
</feature>
<feature type="sequence variant" id="VAR_069890" description="In dbSNP:rs919533." evidence="3">
    <original>P</original>
    <variation>T</variation>
    <location>
        <position position="402"/>
    </location>
</feature>
<feature type="sequence variant" id="VAR_069891" description="In GLC1F; uncertain significance; dbSNP:rs104886487." evidence="3">
    <original>S</original>
    <variation>G</variation>
    <location>
        <position position="440"/>
    </location>
</feature>
<feature type="sequence variant" id="VAR_022090" description="In dbSNP:rs3800791." evidence="3">
    <original>R</original>
    <variation>C</variation>
    <location>
        <position position="453"/>
    </location>
</feature>
<feature type="sequence conflict" description="In Ref. 2; BAC86204." evidence="6" ref="2">
    <original>Q</original>
    <variation>R</variation>
    <location>
        <position position="421"/>
    </location>
</feature>
<feature type="sequence conflict" description="In Ref. 2; BAC86204." evidence="6" ref="2">
    <original>L</original>
    <variation>P</variation>
    <location>
        <position position="433"/>
    </location>
</feature>
<feature type="sequence variant" id="VAR_082796" description="In GLC1F; uncertain significance; dbSNP:rs104886462." evidence="3">
    <original>P</original>
    <variation>S</variation>
    <location sequence="Q8WXI3-3">
        <position position="19"/>
    </location>
</feature>
<feature type="sequence variant" id="VAR_082797" description="In GLC1F; uncertain significance; dbSNP:rs104886465." evidence="3">
    <original>R</original>
    <variation>S</variation>
    <location sequence="Q8WXI3-3">
        <position position="32"/>
    </location>
</feature>
<feature type="sequence variant" id="VAR_082798" description="In GLC1F; uncertain significance; dbSNP:rs104886467." evidence="3">
    <original>R</original>
    <variation>Q</variation>
    <location sequence="Q8WXI3-3">
        <position position="39"/>
    </location>
</feature>
<dbReference type="EMBL" id="AF417920">
    <property type="protein sequence ID" value="AAL59159.1"/>
    <property type="molecule type" value="mRNA"/>
</dbReference>
<dbReference type="EMBL" id="AK125565">
    <property type="protein sequence ID" value="BAC86204.1"/>
    <property type="molecule type" value="mRNA"/>
</dbReference>
<dbReference type="EMBL" id="AC010973">
    <property type="status" value="NOT_ANNOTATED_CDS"/>
    <property type="molecule type" value="Genomic_DNA"/>
</dbReference>
<dbReference type="EMBL" id="BC126351">
    <property type="protein sequence ID" value="AAI26352.1"/>
    <property type="molecule type" value="mRNA"/>
</dbReference>
<dbReference type="CCDS" id="CCDS47749.2">
    <molecule id="Q8WXI3-2"/>
</dbReference>
<dbReference type="CCDS" id="CCDS47750.2">
    <molecule id="Q8WXI3-1"/>
</dbReference>
<dbReference type="CCDS" id="CCDS5921.2">
    <molecule id="Q8WXI3-3"/>
</dbReference>
<dbReference type="RefSeq" id="NP_001135931.2">
    <molecule id="Q8WXI3-1"/>
    <property type="nucleotide sequence ID" value="NM_001142459.2"/>
</dbReference>
<dbReference type="RefSeq" id="NP_001135932.2">
    <molecule id="Q8WXI3-2"/>
    <property type="nucleotide sequence ID" value="NM_001142460.1"/>
</dbReference>
<dbReference type="RefSeq" id="NP_543147.2">
    <molecule id="Q8WXI3-3"/>
    <property type="nucleotide sequence ID" value="NM_080871.4"/>
</dbReference>
<dbReference type="SMR" id="Q8WXI3"/>
<dbReference type="BioGRID" id="126459">
    <property type="interactions" value="87"/>
</dbReference>
<dbReference type="FunCoup" id="Q8WXI3">
    <property type="interactions" value="50"/>
</dbReference>
<dbReference type="IntAct" id="Q8WXI3">
    <property type="interactions" value="10"/>
</dbReference>
<dbReference type="MINT" id="Q8WXI3"/>
<dbReference type="STRING" id="9606.ENSP00000391137"/>
<dbReference type="GlyGen" id="Q8WXI3">
    <property type="glycosylation" value="1 site, 1 O-linked glycan (1 site)"/>
</dbReference>
<dbReference type="iPTMnet" id="Q8WXI3"/>
<dbReference type="PhosphoSitePlus" id="Q8WXI3"/>
<dbReference type="BioMuta" id="ASB10"/>
<dbReference type="DMDM" id="126302522"/>
<dbReference type="jPOST" id="Q8WXI3"/>
<dbReference type="MassIVE" id="Q8WXI3"/>
<dbReference type="PaxDb" id="9606-ENSP00000391137"/>
<dbReference type="PeptideAtlas" id="Q8WXI3"/>
<dbReference type="ProteomicsDB" id="75065">
    <molecule id="Q8WXI3-3"/>
</dbReference>
<dbReference type="Antibodypedia" id="32988">
    <property type="antibodies" value="136 antibodies from 19 providers"/>
</dbReference>
<dbReference type="DNASU" id="136371"/>
<dbReference type="Ensembl" id="ENST00000275838.5">
    <molecule id="Q8WXI3-2"/>
    <property type="protein sequence ID" value="ENSP00000275838.1"/>
    <property type="gene ID" value="ENSG00000146926.11"/>
</dbReference>
<dbReference type="Ensembl" id="ENST00000377867.7">
    <molecule id="Q8WXI3-3"/>
    <property type="protein sequence ID" value="ENSP00000367098.3"/>
    <property type="gene ID" value="ENSG00000146926.11"/>
</dbReference>
<dbReference type="Ensembl" id="ENST00000420175.3">
    <molecule id="Q8WXI3-1"/>
    <property type="protein sequence ID" value="ENSP00000391137.2"/>
    <property type="gene ID" value="ENSG00000146926.11"/>
</dbReference>
<dbReference type="GeneID" id="136371"/>
<dbReference type="KEGG" id="hsa:136371"/>
<dbReference type="MANE-Select" id="ENST00000420175.3">
    <property type="protein sequence ID" value="ENSP00000391137.2"/>
    <property type="RefSeq nucleotide sequence ID" value="NM_001142459.2"/>
    <property type="RefSeq protein sequence ID" value="NP_001135931.2"/>
</dbReference>
<dbReference type="UCSC" id="uc003wjl.1">
    <molecule id="Q8WXI3-1"/>
    <property type="organism name" value="human"/>
</dbReference>
<dbReference type="AGR" id="HGNC:17185"/>
<dbReference type="CTD" id="136371"/>
<dbReference type="DisGeNET" id="136371"/>
<dbReference type="GeneCards" id="ASB10"/>
<dbReference type="HGNC" id="HGNC:17185">
    <property type="gene designation" value="ASB10"/>
</dbReference>
<dbReference type="HPA" id="ENSG00000146926">
    <property type="expression patterns" value="Tissue enhanced (heart muscle, skeletal muscle, tongue)"/>
</dbReference>
<dbReference type="MalaCards" id="ASB10"/>
<dbReference type="MIM" id="603383">
    <property type="type" value="phenotype"/>
</dbReference>
<dbReference type="MIM" id="615054">
    <property type="type" value="gene"/>
</dbReference>
<dbReference type="neXtProt" id="NX_Q8WXI3"/>
<dbReference type="OpenTargets" id="ENSG00000146926"/>
<dbReference type="PharmGKB" id="PA25028"/>
<dbReference type="VEuPathDB" id="HostDB:ENSG00000146926"/>
<dbReference type="eggNOG" id="KOG0504">
    <property type="taxonomic scope" value="Eukaryota"/>
</dbReference>
<dbReference type="GeneTree" id="ENSGT00940000158974"/>
<dbReference type="HOGENOM" id="CLU_035721_0_0_1"/>
<dbReference type="InParanoid" id="Q8WXI3"/>
<dbReference type="OMA" id="QGGEMRW"/>
<dbReference type="OrthoDB" id="366390at2759"/>
<dbReference type="PAN-GO" id="Q8WXI3">
    <property type="GO annotations" value="0 GO annotations based on evolutionary models"/>
</dbReference>
<dbReference type="PhylomeDB" id="Q8WXI3"/>
<dbReference type="TreeFam" id="TF323921"/>
<dbReference type="PathwayCommons" id="Q8WXI3"/>
<dbReference type="Reactome" id="R-HSA-8951664">
    <property type="pathway name" value="Neddylation"/>
</dbReference>
<dbReference type="Reactome" id="R-HSA-983168">
    <property type="pathway name" value="Antigen processing: Ubiquitination &amp; Proteasome degradation"/>
</dbReference>
<dbReference type="SignaLink" id="Q8WXI3"/>
<dbReference type="UniPathway" id="UPA00143"/>
<dbReference type="BioGRID-ORCS" id="136371">
    <property type="hits" value="11 hits in 1188 CRISPR screens"/>
</dbReference>
<dbReference type="GenomeRNAi" id="136371"/>
<dbReference type="Pharos" id="Q8WXI3">
    <property type="development level" value="Tbio"/>
</dbReference>
<dbReference type="PRO" id="PR:Q8WXI3"/>
<dbReference type="Proteomes" id="UP000005640">
    <property type="component" value="Chromosome 7"/>
</dbReference>
<dbReference type="RNAct" id="Q8WXI3">
    <property type="molecule type" value="protein"/>
</dbReference>
<dbReference type="Bgee" id="ENSG00000146926">
    <property type="expression patterns" value="Expressed in hindlimb stylopod muscle and 46 other cell types or tissues"/>
</dbReference>
<dbReference type="ExpressionAtlas" id="Q8WXI3">
    <property type="expression patterns" value="baseline and differential"/>
</dbReference>
<dbReference type="GO" id="GO:0005737">
    <property type="term" value="C:cytoplasm"/>
    <property type="evidence" value="ECO:0000314"/>
    <property type="project" value="UniProtKB"/>
</dbReference>
<dbReference type="GO" id="GO:0005829">
    <property type="term" value="C:cytosol"/>
    <property type="evidence" value="ECO:0000304"/>
    <property type="project" value="Reactome"/>
</dbReference>
<dbReference type="GO" id="GO:0005634">
    <property type="term" value="C:nucleus"/>
    <property type="evidence" value="ECO:0000314"/>
    <property type="project" value="UniProtKB"/>
</dbReference>
<dbReference type="GO" id="GO:0035556">
    <property type="term" value="P:intracellular signal transduction"/>
    <property type="evidence" value="ECO:0007669"/>
    <property type="project" value="InterPro"/>
</dbReference>
<dbReference type="GO" id="GO:0016567">
    <property type="term" value="P:protein ubiquitination"/>
    <property type="evidence" value="ECO:0007669"/>
    <property type="project" value="UniProtKB-UniPathway"/>
</dbReference>
<dbReference type="FunFam" id="1.25.40.20:FF:000154">
    <property type="entry name" value="Ankyrin repeat and SOCS box containing 10"/>
    <property type="match status" value="1"/>
</dbReference>
<dbReference type="FunFam" id="1.25.40.20:FF:000228">
    <property type="entry name" value="Ankyrin repeat and SOCS box containing 10"/>
    <property type="match status" value="1"/>
</dbReference>
<dbReference type="FunFam" id="1.25.40.20:FF:000383">
    <property type="entry name" value="Ankyrin repeat and SOCS box protein 10"/>
    <property type="match status" value="1"/>
</dbReference>
<dbReference type="Gene3D" id="1.25.40.20">
    <property type="entry name" value="Ankyrin repeat-containing domain"/>
    <property type="match status" value="3"/>
</dbReference>
<dbReference type="Gene3D" id="1.10.750.20">
    <property type="entry name" value="SOCS box"/>
    <property type="match status" value="1"/>
</dbReference>
<dbReference type="InterPro" id="IPR050663">
    <property type="entry name" value="Ankyrin-SOCS_Box"/>
</dbReference>
<dbReference type="InterPro" id="IPR002110">
    <property type="entry name" value="Ankyrin_rpt"/>
</dbReference>
<dbReference type="InterPro" id="IPR036770">
    <property type="entry name" value="Ankyrin_rpt-contain_sf"/>
</dbReference>
<dbReference type="InterPro" id="IPR001496">
    <property type="entry name" value="SOCS_box"/>
</dbReference>
<dbReference type="InterPro" id="IPR036036">
    <property type="entry name" value="SOCS_box-like_dom_sf"/>
</dbReference>
<dbReference type="PANTHER" id="PTHR24193:SF121">
    <property type="entry name" value="ADA2A-CONTAINING COMPLEX COMPONENT 3, ISOFORM D"/>
    <property type="match status" value="1"/>
</dbReference>
<dbReference type="PANTHER" id="PTHR24193">
    <property type="entry name" value="ANKYRIN REPEAT PROTEIN"/>
    <property type="match status" value="1"/>
</dbReference>
<dbReference type="Pfam" id="PF00023">
    <property type="entry name" value="Ank"/>
    <property type="match status" value="1"/>
</dbReference>
<dbReference type="Pfam" id="PF12796">
    <property type="entry name" value="Ank_2"/>
    <property type="match status" value="2"/>
</dbReference>
<dbReference type="Pfam" id="PF07525">
    <property type="entry name" value="SOCS_box"/>
    <property type="match status" value="1"/>
</dbReference>
<dbReference type="PRINTS" id="PR01415">
    <property type="entry name" value="ANKYRIN"/>
</dbReference>
<dbReference type="SMART" id="SM00248">
    <property type="entry name" value="ANK"/>
    <property type="match status" value="7"/>
</dbReference>
<dbReference type="SMART" id="SM00969">
    <property type="entry name" value="SOCS_box"/>
    <property type="match status" value="1"/>
</dbReference>
<dbReference type="SUPFAM" id="SSF48403">
    <property type="entry name" value="Ankyrin repeat"/>
    <property type="match status" value="1"/>
</dbReference>
<dbReference type="SUPFAM" id="SSF158235">
    <property type="entry name" value="SOCS box-like"/>
    <property type="match status" value="1"/>
</dbReference>
<dbReference type="PROSITE" id="PS50297">
    <property type="entry name" value="ANK_REP_REGION"/>
    <property type="match status" value="1"/>
</dbReference>
<dbReference type="PROSITE" id="PS50088">
    <property type="entry name" value="ANK_REPEAT"/>
    <property type="match status" value="5"/>
</dbReference>
<dbReference type="PROSITE" id="PS50225">
    <property type="entry name" value="SOCS"/>
    <property type="match status" value="1"/>
</dbReference>
<sequence>MLMSWSPEECKGQGEPLDDRHPLCARLVEKPSRGSEEHLKSGPGPIVTRTASGPALAFWQAVLAGDVGCVSRILADSSTGLAPDSVFDTSDPERWRDFRFNIRALRLWSLTYEEELTTPLHVAASRGHTEVLRLLLRRRARPDSAPGGRTALHEACAAGHTACVHVLLVAGADPNIADQDGKRPLHLCRGPGTLECAELLLRFGARVDGRSEEEEETPLHVAARLGHVELADLLLRRGACPDARNAEGWTPLLAACDVRCQSITDAEATTARCLQLCSLLLSAGADADAADQDKQRPLHLACRRGHAAVVELLLSCGVSANTMDYGGHTPLHCALQGPAAALAQSPEHVVRALLNHGAVRVWPGALPKVLERWSTCPRTIEVLMNTYSVVQLPEEAVGLVTPETLQKHQRFYSSLFALVRQPRSLQHLSRCALRSHLEGSLPQALPRLPLPPRLLRYLQLDFEGVLY</sequence>
<evidence type="ECO:0000250" key="1"/>
<evidence type="ECO:0000255" key="2">
    <source>
        <dbReference type="PROSITE-ProRule" id="PRU00194"/>
    </source>
</evidence>
<evidence type="ECO:0000269" key="3">
    <source>
    </source>
</evidence>
<evidence type="ECO:0000303" key="4">
    <source>
    </source>
</evidence>
<evidence type="ECO:0000303" key="5">
    <source ref="1"/>
</evidence>
<evidence type="ECO:0000305" key="6"/>
<organism>
    <name type="scientific">Homo sapiens</name>
    <name type="common">Human</name>
    <dbReference type="NCBI Taxonomy" id="9606"/>
    <lineage>
        <taxon>Eukaryota</taxon>
        <taxon>Metazoa</taxon>
        <taxon>Chordata</taxon>
        <taxon>Craniata</taxon>
        <taxon>Vertebrata</taxon>
        <taxon>Euteleostomi</taxon>
        <taxon>Mammalia</taxon>
        <taxon>Eutheria</taxon>
        <taxon>Euarchontoglires</taxon>
        <taxon>Primates</taxon>
        <taxon>Haplorrhini</taxon>
        <taxon>Catarrhini</taxon>
        <taxon>Hominidae</taxon>
        <taxon>Homo</taxon>
    </lineage>
</organism>
<proteinExistence type="evidence at protein level"/>
<accession>Q8WXI3</accession>
<accession>A0AVH0</accession>
<accession>Q6ZUL6</accession>
<protein>
    <recommendedName>
        <fullName>Ankyrin repeat and SOCS box protein 10</fullName>
        <shortName>ASB-10</shortName>
    </recommendedName>
</protein>